<keyword id="KW-1238">Degradation of host capsule during virus entry</keyword>
<keyword id="KW-1235">Degradation of host cell envelope components during virus entry</keyword>
<keyword id="KW-0945">Host-virus interaction</keyword>
<keyword id="KW-0456">Lyase</keyword>
<keyword id="KW-1185">Reference proteome</keyword>
<keyword id="KW-1233">Viral attachment to host adhesion receptor</keyword>
<keyword id="KW-1161">Viral attachment to host cell</keyword>
<keyword id="KW-1227">Viral tail protein</keyword>
<keyword id="KW-0946">Virion</keyword>
<keyword id="KW-1160">Virus entry into host cell</keyword>
<organism>
    <name type="scientific">Klebsiella phage K5-2</name>
    <name type="common">Bacteriophage K5-2</name>
    <dbReference type="NCBI Taxonomy" id="1932361"/>
    <lineage>
        <taxon>Viruses</taxon>
        <taxon>Duplodnaviria</taxon>
        <taxon>Heunggongvirae</taxon>
        <taxon>Uroviricota</taxon>
        <taxon>Caudoviricetes</taxon>
        <taxon>Autographiviridae</taxon>
        <taxon>Studiervirinae</taxon>
        <taxon>Przondovirus</taxon>
        <taxon>Przondovirus K52</taxon>
    </lineage>
</organism>
<organismHost>
    <name type="scientific">Klebsiella</name>
    <dbReference type="NCBI Taxonomy" id="570"/>
</organismHost>
<comment type="function">
    <text evidence="2 4">Functions as a receptor binding protein (RBP) and probably mediates the attachment to the host capsular exopolysaccharides (Probable). Displays a depolymerase activity that specifically degrades the K30/K69-type polysaccharides of Klebsiella pneumoniae capsule, which allows the phage to reach the host cell membrane and bind the entry receptor (PubMed:28676686).</text>
</comment>
<comment type="subunit">
    <text evidence="1">Interacts (via N-terminus) with depolymerase 2 (via N-terminus); this interaction probably gives rise to a branched tailspike.</text>
</comment>
<comment type="subcellular location">
    <subcellularLocation>
        <location evidence="1">Virion</location>
    </subcellularLocation>
    <text evidence="1">Tail appendage. Depolymerase 1 is connected to the phage tail via an N-terminal anchor domain, while depolymerase 2 is attached to depolymerase 1.</text>
</comment>
<comment type="domain">
    <text evidence="1 3">The N-terminus anchors the RBP to the virion (By similarity). The central part and C-terminus probably binds and degrades the host exopolysaccharides (Probable).</text>
</comment>
<comment type="similarity">
    <text evidence="3">In the N-terminal section; belongs to the Teseptimavirus fiber family.</text>
</comment>
<comment type="similarity">
    <text evidence="3">In the C-terminal section; belongs to the K30/K69-specific depolymerase family.</text>
</comment>
<dbReference type="EMBL" id="KY389315">
    <property type="protein sequence ID" value="APZ82804.1"/>
    <property type="molecule type" value="Genomic_DNA"/>
</dbReference>
<dbReference type="SMR" id="A0A219YHC0"/>
<dbReference type="BRENDA" id="3.2.1.87">
    <property type="organism ID" value="16795"/>
</dbReference>
<dbReference type="Proteomes" id="UP000224375">
    <property type="component" value="Genome"/>
</dbReference>
<dbReference type="GO" id="GO:0098015">
    <property type="term" value="C:virus tail"/>
    <property type="evidence" value="ECO:0007669"/>
    <property type="project" value="UniProtKB-KW"/>
</dbReference>
<dbReference type="GO" id="GO:0016829">
    <property type="term" value="F:lyase activity"/>
    <property type="evidence" value="ECO:0007669"/>
    <property type="project" value="UniProtKB-KW"/>
</dbReference>
<dbReference type="GO" id="GO:0098671">
    <property type="term" value="P:adhesion receptor-mediated virion attachment to host cell"/>
    <property type="evidence" value="ECO:0007669"/>
    <property type="project" value="UniProtKB-KW"/>
</dbReference>
<dbReference type="GO" id="GO:0098994">
    <property type="term" value="P:symbiont entry into host cell via disruption of host cell envelope"/>
    <property type="evidence" value="ECO:0007669"/>
    <property type="project" value="UniProtKB-KW"/>
</dbReference>
<dbReference type="GO" id="GO:0098996">
    <property type="term" value="P:symbiont entry into host cell via disruption of host cell glycocalyx"/>
    <property type="evidence" value="ECO:0007669"/>
    <property type="project" value="UniProtKB-KW"/>
</dbReference>
<dbReference type="Gene3D" id="2.160.20.10">
    <property type="entry name" value="Single-stranded right-handed beta-helix, Pectin lyase-like"/>
    <property type="match status" value="1"/>
</dbReference>
<dbReference type="InterPro" id="IPR012334">
    <property type="entry name" value="Pectin_lyas_fold"/>
</dbReference>
<dbReference type="InterPro" id="IPR011050">
    <property type="entry name" value="Pectin_lyase_fold/virulence"/>
</dbReference>
<dbReference type="InterPro" id="IPR005604">
    <property type="entry name" value="Phage_T7_tail_fibre-like_N"/>
</dbReference>
<dbReference type="Pfam" id="PF03906">
    <property type="entry name" value="Phage_T7_tail"/>
    <property type="match status" value="1"/>
</dbReference>
<dbReference type="SUPFAM" id="SSF51126">
    <property type="entry name" value="Pectin lyase-like"/>
    <property type="match status" value="1"/>
</dbReference>
<reference key="1">
    <citation type="journal article" date="2017" name="Sci. Rep.">
        <title>Two T7-like Bacteriophages, K5-2 and K5-4, Each Encodes Two Capsule Depolymerases: Isolation and Functional Characterization.</title>
        <authorList>
            <person name="Hsieh P.F."/>
            <person name="Lin H.H."/>
            <person name="Lin T.L."/>
            <person name="Chen Y.Y."/>
            <person name="Wang J.T."/>
        </authorList>
    </citation>
    <scope>NUCLEOTIDE SEQUENCE [LARGE SCALE GENOMIC DNA]</scope>
    <scope>FUNCTION</scope>
</reference>
<reference key="2">
    <citation type="journal article" date="2019" name="Front. Microbiol.">
        <title>Modeling the Architecture of Depolymerase-Containing Receptor Binding Proteins in Klebsiella Phages.</title>
        <authorList>
            <person name="Latka A."/>
            <person name="Leiman P.G."/>
            <person name="Drulis-Kawa Z."/>
            <person name="Briers Y."/>
        </authorList>
    </citation>
    <scope>REVIEW</scope>
</reference>
<sequence>MDQDIKTVIQYPVGATEFDIPFDYLSRKFVRVSLVSDDNRRLLSNITEYRYVSKTRVKLLVDTTGFDRVEIRRFTSASERIVDFSDGSVLRAADLNVSQIQSAHIAEEARDAALMAMPQDDAGNLDARNRRIVRLAPGIDGTDAINKNQLDTTLGEAGGILSEIKGEKEQFYEYLEKFADDTTMIRGVTWVYNGGSAVGGETSIVINKPTAVFAVPYIEINGDSQEVGYQYDFNASTQTITLAKPLAAGDFLMAMTSESHLPLESLLAGTTGASSIGTKDGGTVQSALDNLGYYIVPESFGAKGDGVTDDTAAVQAAINAAKGKTLWLDASKMYICQNLVIPHAMTIAAGGRRQGGGLIPKGNSGPVVHSGDFILITAEQTVTMFNVTIDARGRPLTKVDGQRLNGLRQVDNTSGVYRSGFQLYNCNISGFSGLNIVGGAARSFGIIKDTQCESSDLTCIRIQGVDWRIDHTYVGRSGTGHGIELLNESNVVSNCDSYFNKKSGVVYTQATGKTFFKLIACTLNSNGEHGVYIACPYMQPAGIIIVDNRFWNNSTSSDGVYSNITLSYGRGHIVVGNIHEAYQPADGSSSARAAYCVNLLNGARPAHMLDNYDPAYSYRTDFCNINVVDKINYNTHHIGSAKTFTVGVSSATSQAIGVFVDGESFPRASIGNGGIRFGKGDAAPAVGLGFDNNYPNHVVSFKGLAVLGAWDTSTFRVGGYRIWAGNGAGQLYFQYGADPTSQTDGKLFVGRTVSPPASSSSSGNTGDIAIDSGFLYVCVAFNTWKRVALSTF</sequence>
<gene>
    <name evidence="5" type="ORF">k52_037</name>
</gene>
<name>DPOL1_BPK52</name>
<protein>
    <recommendedName>
        <fullName evidence="3">Depolymerase 1, capsule K30/K69-specific</fullName>
    </recommendedName>
    <alternativeName>
        <fullName evidence="3">Gene product 37</fullName>
        <shortName evidence="3">gp37</shortName>
    </alternativeName>
    <alternativeName>
        <fullName>K30/K69 depolymerase</fullName>
    </alternativeName>
    <alternativeName>
        <fullName evidence="3">Probable tail spike protein</fullName>
    </alternativeName>
</protein>
<proteinExistence type="inferred from homology"/>
<accession>A0A219YHC0</accession>
<feature type="chain" id="PRO_0000458713" description="Depolymerase 1, capsule K30/K69-specific">
    <location>
        <begin position="1"/>
        <end position="792"/>
    </location>
</feature>
<evidence type="ECO:0000250" key="1">
    <source>
        <dbReference type="UniProtKB" id="D1L2X0"/>
    </source>
</evidence>
<evidence type="ECO:0000269" key="2">
    <source>
    </source>
</evidence>
<evidence type="ECO:0000305" key="3"/>
<evidence type="ECO:0000305" key="4">
    <source>
    </source>
</evidence>
<evidence type="ECO:0000312" key="5">
    <source>
        <dbReference type="EMBL" id="APZ82804.1"/>
    </source>
</evidence>